<comment type="function">
    <text evidence="1">This protein is one of the two subunits of integration host factor, a specific DNA-binding protein that functions in genetic recombination as well as in transcriptional and translational control.</text>
</comment>
<comment type="subunit">
    <text evidence="1">Heterodimer of an alpha and a beta chain.</text>
</comment>
<comment type="similarity">
    <text evidence="3">Belongs to the bacterial histone-like protein family.</text>
</comment>
<proteinExistence type="inferred from homology"/>
<sequence>MGALTKAEMAERLYEELGLNKREAKELVELFFEEIRHALEENEQVKLSGFGNFDLRDKRQRPGRNPKTGEEIPITARRVVTFRPGQKLKARVEAYAGTKP</sequence>
<reference key="1">
    <citation type="journal article" date="2002" name="Environ. Microbiol.">
        <title>Complete genome sequence and comparative analysis of the metabolically versatile Pseudomonas putida KT2440.</title>
        <authorList>
            <person name="Nelson K.E."/>
            <person name="Weinel C."/>
            <person name="Paulsen I.T."/>
            <person name="Dodson R.J."/>
            <person name="Hilbert H."/>
            <person name="Martins dos Santos V.A.P."/>
            <person name="Fouts D.E."/>
            <person name="Gill S.R."/>
            <person name="Pop M."/>
            <person name="Holmes M."/>
            <person name="Brinkac L.M."/>
            <person name="Beanan M.J."/>
            <person name="DeBoy R.T."/>
            <person name="Daugherty S.C."/>
            <person name="Kolonay J.F."/>
            <person name="Madupu R."/>
            <person name="Nelson W.C."/>
            <person name="White O."/>
            <person name="Peterson J.D."/>
            <person name="Khouri H.M."/>
            <person name="Hance I."/>
            <person name="Chris Lee P."/>
            <person name="Holtzapple E.K."/>
            <person name="Scanlan D."/>
            <person name="Tran K."/>
            <person name="Moazzez A."/>
            <person name="Utterback T.R."/>
            <person name="Rizzo M."/>
            <person name="Lee K."/>
            <person name="Kosack D."/>
            <person name="Moestl D."/>
            <person name="Wedler H."/>
            <person name="Lauber J."/>
            <person name="Stjepandic D."/>
            <person name="Hoheisel J."/>
            <person name="Straetz M."/>
            <person name="Heim S."/>
            <person name="Kiewitz C."/>
            <person name="Eisen J.A."/>
            <person name="Timmis K.N."/>
            <person name="Duesterhoeft A."/>
            <person name="Tuemmler B."/>
            <person name="Fraser C.M."/>
        </authorList>
    </citation>
    <scope>NUCLEOTIDE SEQUENCE [LARGE SCALE GENOMIC DNA]</scope>
    <source>
        <strain>ATCC 47054 / DSM 6125 / CFBP 8728 / NCIMB 11950 / KT2440</strain>
    </source>
</reference>
<dbReference type="EMBL" id="AE015451">
    <property type="protein sequence ID" value="AAN68083.1"/>
    <property type="molecule type" value="Genomic_DNA"/>
</dbReference>
<dbReference type="RefSeq" id="NP_744619.1">
    <property type="nucleotide sequence ID" value="NC_002947.4"/>
</dbReference>
<dbReference type="RefSeq" id="WP_003250679.1">
    <property type="nucleotide sequence ID" value="NZ_CP169744.1"/>
</dbReference>
<dbReference type="SMR" id="P0A126"/>
<dbReference type="STRING" id="160488.PP_2471"/>
<dbReference type="PaxDb" id="160488-PP_2471"/>
<dbReference type="GeneID" id="97167552"/>
<dbReference type="KEGG" id="ppu:PP_2471"/>
<dbReference type="PATRIC" id="fig|160488.4.peg.2617"/>
<dbReference type="eggNOG" id="COG0776">
    <property type="taxonomic scope" value="Bacteria"/>
</dbReference>
<dbReference type="HOGENOM" id="CLU_105066_1_3_6"/>
<dbReference type="OrthoDB" id="9797747at2"/>
<dbReference type="PhylomeDB" id="P0A126"/>
<dbReference type="BioCyc" id="PPUT160488:G1G01-2642-MONOMER"/>
<dbReference type="Proteomes" id="UP000000556">
    <property type="component" value="Chromosome"/>
</dbReference>
<dbReference type="CollecTF" id="EXPREG_000006f0"/>
<dbReference type="GO" id="GO:0005829">
    <property type="term" value="C:cytosol"/>
    <property type="evidence" value="ECO:0007669"/>
    <property type="project" value="TreeGrafter"/>
</dbReference>
<dbReference type="GO" id="GO:0032993">
    <property type="term" value="C:protein-DNA complex"/>
    <property type="evidence" value="ECO:0000315"/>
    <property type="project" value="CollecTF"/>
</dbReference>
<dbReference type="GO" id="GO:0001216">
    <property type="term" value="F:DNA-binding transcription activator activity"/>
    <property type="evidence" value="ECO:0000315"/>
    <property type="project" value="CollecTF"/>
</dbReference>
<dbReference type="GO" id="GO:0001217">
    <property type="term" value="F:DNA-binding transcription repressor activity"/>
    <property type="evidence" value="ECO:0000315"/>
    <property type="project" value="CollecTF"/>
</dbReference>
<dbReference type="GO" id="GO:0030527">
    <property type="term" value="F:structural constituent of chromatin"/>
    <property type="evidence" value="ECO:0007669"/>
    <property type="project" value="InterPro"/>
</dbReference>
<dbReference type="GO" id="GO:0000976">
    <property type="term" value="F:transcription cis-regulatory region binding"/>
    <property type="evidence" value="ECO:0000315"/>
    <property type="project" value="CollecTF"/>
</dbReference>
<dbReference type="GO" id="GO:0006310">
    <property type="term" value="P:DNA recombination"/>
    <property type="evidence" value="ECO:0007669"/>
    <property type="project" value="UniProtKB-UniRule"/>
</dbReference>
<dbReference type="GO" id="GO:0006417">
    <property type="term" value="P:regulation of translation"/>
    <property type="evidence" value="ECO:0007669"/>
    <property type="project" value="UniProtKB-UniRule"/>
</dbReference>
<dbReference type="CDD" id="cd13835">
    <property type="entry name" value="IHF_A"/>
    <property type="match status" value="1"/>
</dbReference>
<dbReference type="FunFam" id="4.10.520.10:FF:000002">
    <property type="entry name" value="Integration host factor subunit alpha"/>
    <property type="match status" value="1"/>
</dbReference>
<dbReference type="Gene3D" id="4.10.520.10">
    <property type="entry name" value="IHF-like DNA-binding proteins"/>
    <property type="match status" value="1"/>
</dbReference>
<dbReference type="HAMAP" id="MF_00380">
    <property type="entry name" value="IHF_alpha"/>
    <property type="match status" value="1"/>
</dbReference>
<dbReference type="InterPro" id="IPR000119">
    <property type="entry name" value="Hist_DNA-bd"/>
</dbReference>
<dbReference type="InterPro" id="IPR020816">
    <property type="entry name" value="Histone-like_DNA-bd_CS"/>
</dbReference>
<dbReference type="InterPro" id="IPR010992">
    <property type="entry name" value="IHF-like_DNA-bd_dom_sf"/>
</dbReference>
<dbReference type="InterPro" id="IPR005684">
    <property type="entry name" value="IHF_alpha"/>
</dbReference>
<dbReference type="NCBIfam" id="TIGR00987">
    <property type="entry name" value="himA"/>
    <property type="match status" value="1"/>
</dbReference>
<dbReference type="NCBIfam" id="NF001401">
    <property type="entry name" value="PRK00285.1"/>
    <property type="match status" value="1"/>
</dbReference>
<dbReference type="PANTHER" id="PTHR33175">
    <property type="entry name" value="DNA-BINDING PROTEIN HU"/>
    <property type="match status" value="1"/>
</dbReference>
<dbReference type="PANTHER" id="PTHR33175:SF2">
    <property type="entry name" value="INTEGRATION HOST FACTOR SUBUNIT ALPHA"/>
    <property type="match status" value="1"/>
</dbReference>
<dbReference type="Pfam" id="PF00216">
    <property type="entry name" value="Bac_DNA_binding"/>
    <property type="match status" value="1"/>
</dbReference>
<dbReference type="PRINTS" id="PR01727">
    <property type="entry name" value="DNABINDINGHU"/>
</dbReference>
<dbReference type="SMART" id="SM00411">
    <property type="entry name" value="BHL"/>
    <property type="match status" value="1"/>
</dbReference>
<dbReference type="SUPFAM" id="SSF47729">
    <property type="entry name" value="IHF-like DNA-binding proteins"/>
    <property type="match status" value="1"/>
</dbReference>
<dbReference type="PROSITE" id="PS00045">
    <property type="entry name" value="HISTONE_LIKE"/>
    <property type="match status" value="1"/>
</dbReference>
<evidence type="ECO:0000250" key="1"/>
<evidence type="ECO:0000256" key="2">
    <source>
        <dbReference type="SAM" id="MobiDB-lite"/>
    </source>
</evidence>
<evidence type="ECO:0000305" key="3"/>
<accession>P0A126</accession>
<accession>Q52284</accession>
<keyword id="KW-0233">DNA recombination</keyword>
<keyword id="KW-0238">DNA-binding</keyword>
<keyword id="KW-1185">Reference proteome</keyword>
<keyword id="KW-0804">Transcription</keyword>
<keyword id="KW-0805">Transcription regulation</keyword>
<keyword id="KW-0810">Translation regulation</keyword>
<gene>
    <name type="primary">ihfA</name>
    <name type="synonym">himA</name>
    <name type="ordered locus">PP_2471</name>
</gene>
<protein>
    <recommendedName>
        <fullName>Integration host factor subunit alpha</fullName>
        <shortName>IHF-alpha</shortName>
    </recommendedName>
</protein>
<feature type="chain" id="PRO_0000105018" description="Integration host factor subunit alpha">
    <location>
        <begin position="1"/>
        <end position="100"/>
    </location>
</feature>
<feature type="region of interest" description="Disordered" evidence="2">
    <location>
        <begin position="53"/>
        <end position="72"/>
    </location>
</feature>
<organism>
    <name type="scientific">Pseudomonas putida (strain ATCC 47054 / DSM 6125 / CFBP 8728 / NCIMB 11950 / KT2440)</name>
    <dbReference type="NCBI Taxonomy" id="160488"/>
    <lineage>
        <taxon>Bacteria</taxon>
        <taxon>Pseudomonadati</taxon>
        <taxon>Pseudomonadota</taxon>
        <taxon>Gammaproteobacteria</taxon>
        <taxon>Pseudomonadales</taxon>
        <taxon>Pseudomonadaceae</taxon>
        <taxon>Pseudomonas</taxon>
    </lineage>
</organism>
<name>IHFA_PSEPK</name>